<reference key="1">
    <citation type="journal article" date="1997" name="DNA Res.">
        <title>Structural analysis of Arabidopsis thaliana chromosome 5. I. Sequence features of the 1.6 Mb regions covered by twenty physically assigned P1 clones.</title>
        <authorList>
            <person name="Sato S."/>
            <person name="Kotani H."/>
            <person name="Nakamura Y."/>
            <person name="Kaneko T."/>
            <person name="Asamizu E."/>
            <person name="Fukami M."/>
            <person name="Miyajima N."/>
            <person name="Tabata S."/>
        </authorList>
    </citation>
    <scope>NUCLEOTIDE SEQUENCE [LARGE SCALE GENOMIC DNA]</scope>
    <source>
        <strain>cv. Columbia</strain>
    </source>
</reference>
<reference key="2">
    <citation type="journal article" date="2017" name="Plant J.">
        <title>Araport11: a complete reannotation of the Arabidopsis thaliana reference genome.</title>
        <authorList>
            <person name="Cheng C.Y."/>
            <person name="Krishnakumar V."/>
            <person name="Chan A.P."/>
            <person name="Thibaud-Nissen F."/>
            <person name="Schobel S."/>
            <person name="Town C.D."/>
        </authorList>
    </citation>
    <scope>GENOME REANNOTATION</scope>
    <source>
        <strain>cv. Columbia</strain>
    </source>
</reference>
<name>FBL86_ARATH</name>
<gene>
    <name type="ordered locus">At5g38396</name>
    <name type="ORF">MXI10</name>
</gene>
<keyword id="KW-0433">Leucine-rich repeat</keyword>
<keyword id="KW-1185">Reference proteome</keyword>
<keyword id="KW-0677">Repeat</keyword>
<feature type="chain" id="PRO_0000281983" description="F-box/LRR-repeat protein At5g38396">
    <location>
        <begin position="1"/>
        <end position="462"/>
    </location>
</feature>
<feature type="domain" description="F-box" evidence="1">
    <location>
        <begin position="1"/>
        <end position="47"/>
    </location>
</feature>
<feature type="repeat" description="LRR 1">
    <location>
        <begin position="118"/>
        <end position="146"/>
    </location>
</feature>
<feature type="repeat" description="LRR 2">
    <location>
        <begin position="148"/>
        <end position="175"/>
    </location>
</feature>
<feature type="repeat" description="LRR 3">
    <location>
        <begin position="197"/>
        <end position="222"/>
    </location>
</feature>
<feature type="repeat" description="LRR 4">
    <location>
        <begin position="302"/>
        <end position="333"/>
    </location>
</feature>
<feature type="repeat" description="LRR 5">
    <location>
        <begin position="334"/>
        <end position="359"/>
    </location>
</feature>
<protein>
    <recommendedName>
        <fullName>F-box/LRR-repeat protein At5g38396</fullName>
    </recommendedName>
</protein>
<sequence>MDLLRNIPDELICHILSFLTTKEAALTSVLSKRWRNLLAFVSNLHIDDSIFLHPEEGKRDRNEIRQSFLDFVGRILALQGNCPVKKVSIKFLFKLDSDRVDGWISNVLARGVSELDLSIDLCMDEYFLLSSKRFESKNLVRLKLHRLCIGQREKTVGWLAGEIFLPMLKTLELDYVGFYGDLLFLRALPALEELVIVDAFWFTTFTDVTVSNPSLKTLTMSSNIYSGSISFDTPSLVYFSHFKYVAKDYPLVNMENLLEARINLGVTEGQIRRAREPNNNDEVVLRFPNVGKLMNGIRNVQCLDLSANTLEMLSLSCESMPVFKNLKSLSIKSAENRGWQAMPVLLRNCPHLETLVLEGLLHFVTDKCGDACDCVSREEKGRSLTSCPVKTLEIKEFHGTMEEMYMITHFLDYFPCLKELKIYIEGNDHAQREVSEVIAEKIKLYNKSSSSNVQLMVSGYHE</sequence>
<proteinExistence type="predicted"/>
<accession>Q3E8L4</accession>
<dbReference type="EMBL" id="AB005248">
    <property type="status" value="NOT_ANNOTATED_CDS"/>
    <property type="molecule type" value="Genomic_DNA"/>
</dbReference>
<dbReference type="EMBL" id="CP002688">
    <property type="protein sequence ID" value="AED94309.1"/>
    <property type="molecule type" value="Genomic_DNA"/>
</dbReference>
<dbReference type="RefSeq" id="NP_680364.1">
    <property type="nucleotide sequence ID" value="NM_148059.1"/>
</dbReference>
<dbReference type="FunCoup" id="Q3E8L4">
    <property type="interactions" value="234"/>
</dbReference>
<dbReference type="iPTMnet" id="Q3E8L4"/>
<dbReference type="PaxDb" id="3702-AT5G38396.1"/>
<dbReference type="EnsemblPlants" id="AT5G38396.1">
    <property type="protein sequence ID" value="AT5G38396.1"/>
    <property type="gene ID" value="AT5G38396"/>
</dbReference>
<dbReference type="GeneID" id="833826"/>
<dbReference type="Gramene" id="AT5G38396.1">
    <property type="protein sequence ID" value="AT5G38396.1"/>
    <property type="gene ID" value="AT5G38396"/>
</dbReference>
<dbReference type="KEGG" id="ath:AT5G38396"/>
<dbReference type="Araport" id="AT5G38396"/>
<dbReference type="TAIR" id="AT5G38396"/>
<dbReference type="HOGENOM" id="CLU_010721_7_4_1"/>
<dbReference type="InParanoid" id="Q3E8L4"/>
<dbReference type="OMA" id="FANQTRD"/>
<dbReference type="PhylomeDB" id="Q3E8L4"/>
<dbReference type="PRO" id="PR:Q3E8L4"/>
<dbReference type="Proteomes" id="UP000006548">
    <property type="component" value="Chromosome 5"/>
</dbReference>
<dbReference type="ExpressionAtlas" id="Q3E8L4">
    <property type="expression patterns" value="baseline and differential"/>
</dbReference>
<dbReference type="CDD" id="cd22160">
    <property type="entry name" value="F-box_AtFBL13-like"/>
    <property type="match status" value="1"/>
</dbReference>
<dbReference type="Gene3D" id="1.20.1280.50">
    <property type="match status" value="1"/>
</dbReference>
<dbReference type="Gene3D" id="3.80.10.10">
    <property type="entry name" value="Ribonuclease Inhibitor"/>
    <property type="match status" value="1"/>
</dbReference>
<dbReference type="InterPro" id="IPR036047">
    <property type="entry name" value="F-box-like_dom_sf"/>
</dbReference>
<dbReference type="InterPro" id="IPR053781">
    <property type="entry name" value="F-box_AtFBL13-like"/>
</dbReference>
<dbReference type="InterPro" id="IPR001810">
    <property type="entry name" value="F-box_dom"/>
</dbReference>
<dbReference type="InterPro" id="IPR006566">
    <property type="entry name" value="FBD"/>
</dbReference>
<dbReference type="InterPro" id="IPR055294">
    <property type="entry name" value="FBL60-like"/>
</dbReference>
<dbReference type="InterPro" id="IPR032675">
    <property type="entry name" value="LRR_dom_sf"/>
</dbReference>
<dbReference type="PANTHER" id="PTHR31293">
    <property type="entry name" value="RNI-LIKE SUPERFAMILY PROTEIN"/>
    <property type="match status" value="1"/>
</dbReference>
<dbReference type="PANTHER" id="PTHR31293:SF16">
    <property type="entry name" value="RNI-LIKE SUPERFAMILY PROTEIN"/>
    <property type="match status" value="1"/>
</dbReference>
<dbReference type="Pfam" id="PF00646">
    <property type="entry name" value="F-box"/>
    <property type="match status" value="1"/>
</dbReference>
<dbReference type="SMART" id="SM00579">
    <property type="entry name" value="FBD"/>
    <property type="match status" value="1"/>
</dbReference>
<dbReference type="SMART" id="SM00256">
    <property type="entry name" value="FBOX"/>
    <property type="match status" value="1"/>
</dbReference>
<dbReference type="SUPFAM" id="SSF81383">
    <property type="entry name" value="F-box domain"/>
    <property type="match status" value="1"/>
</dbReference>
<dbReference type="SUPFAM" id="SSF52047">
    <property type="entry name" value="RNI-like"/>
    <property type="match status" value="1"/>
</dbReference>
<dbReference type="PROSITE" id="PS50181">
    <property type="entry name" value="FBOX"/>
    <property type="match status" value="1"/>
</dbReference>
<organism>
    <name type="scientific">Arabidopsis thaliana</name>
    <name type="common">Mouse-ear cress</name>
    <dbReference type="NCBI Taxonomy" id="3702"/>
    <lineage>
        <taxon>Eukaryota</taxon>
        <taxon>Viridiplantae</taxon>
        <taxon>Streptophyta</taxon>
        <taxon>Embryophyta</taxon>
        <taxon>Tracheophyta</taxon>
        <taxon>Spermatophyta</taxon>
        <taxon>Magnoliopsida</taxon>
        <taxon>eudicotyledons</taxon>
        <taxon>Gunneridae</taxon>
        <taxon>Pentapetalae</taxon>
        <taxon>rosids</taxon>
        <taxon>malvids</taxon>
        <taxon>Brassicales</taxon>
        <taxon>Brassicaceae</taxon>
        <taxon>Camelineae</taxon>
        <taxon>Arabidopsis</taxon>
    </lineage>
</organism>
<evidence type="ECO:0000255" key="1">
    <source>
        <dbReference type="PROSITE-ProRule" id="PRU00080"/>
    </source>
</evidence>